<gene>
    <name evidence="1" type="primary">rpoC</name>
    <name type="ordered locus">CLK_2931</name>
</gene>
<reference key="1">
    <citation type="journal article" date="2007" name="PLoS ONE">
        <title>Analysis of the neurotoxin complex genes in Clostridium botulinum A1-A4 and B1 strains: BoNT/A3, /Ba4 and /B1 clusters are located within plasmids.</title>
        <authorList>
            <person name="Smith T.J."/>
            <person name="Hill K.K."/>
            <person name="Foley B.T."/>
            <person name="Detter J.C."/>
            <person name="Munk A.C."/>
            <person name="Bruce D.C."/>
            <person name="Doggett N.A."/>
            <person name="Smith L.A."/>
            <person name="Marks J.D."/>
            <person name="Xie G."/>
            <person name="Brettin T.S."/>
        </authorList>
    </citation>
    <scope>NUCLEOTIDE SEQUENCE [LARGE SCALE GENOMIC DNA]</scope>
    <source>
        <strain>Loch Maree / Type A3</strain>
    </source>
</reference>
<name>RPOC_CLOBM</name>
<dbReference type="EC" id="2.7.7.6" evidence="1"/>
<dbReference type="EMBL" id="CP000962">
    <property type="protein sequence ID" value="ACA54678.1"/>
    <property type="molecule type" value="Genomic_DNA"/>
</dbReference>
<dbReference type="RefSeq" id="WP_012342751.1">
    <property type="nucleotide sequence ID" value="NC_010520.1"/>
</dbReference>
<dbReference type="SMR" id="B1KSN2"/>
<dbReference type="KEGG" id="cbl:CLK_2931"/>
<dbReference type="HOGENOM" id="CLU_000524_3_1_9"/>
<dbReference type="GO" id="GO:0000428">
    <property type="term" value="C:DNA-directed RNA polymerase complex"/>
    <property type="evidence" value="ECO:0007669"/>
    <property type="project" value="UniProtKB-KW"/>
</dbReference>
<dbReference type="GO" id="GO:0003677">
    <property type="term" value="F:DNA binding"/>
    <property type="evidence" value="ECO:0007669"/>
    <property type="project" value="UniProtKB-UniRule"/>
</dbReference>
<dbReference type="GO" id="GO:0003899">
    <property type="term" value="F:DNA-directed RNA polymerase activity"/>
    <property type="evidence" value="ECO:0007669"/>
    <property type="project" value="UniProtKB-UniRule"/>
</dbReference>
<dbReference type="GO" id="GO:0000287">
    <property type="term" value="F:magnesium ion binding"/>
    <property type="evidence" value="ECO:0007669"/>
    <property type="project" value="UniProtKB-UniRule"/>
</dbReference>
<dbReference type="GO" id="GO:0008270">
    <property type="term" value="F:zinc ion binding"/>
    <property type="evidence" value="ECO:0007669"/>
    <property type="project" value="UniProtKB-UniRule"/>
</dbReference>
<dbReference type="GO" id="GO:0006351">
    <property type="term" value="P:DNA-templated transcription"/>
    <property type="evidence" value="ECO:0007669"/>
    <property type="project" value="UniProtKB-UniRule"/>
</dbReference>
<dbReference type="CDD" id="cd02655">
    <property type="entry name" value="RNAP_beta'_C"/>
    <property type="match status" value="1"/>
</dbReference>
<dbReference type="CDD" id="cd01609">
    <property type="entry name" value="RNAP_beta'_N"/>
    <property type="match status" value="1"/>
</dbReference>
<dbReference type="FunFam" id="1.10.150.390:FF:000002">
    <property type="entry name" value="DNA-directed RNA polymerase subunit beta"/>
    <property type="match status" value="1"/>
</dbReference>
<dbReference type="FunFam" id="1.10.40.90:FF:000001">
    <property type="entry name" value="DNA-directed RNA polymerase subunit beta"/>
    <property type="match status" value="1"/>
</dbReference>
<dbReference type="FunFam" id="4.10.860.120:FF:000001">
    <property type="entry name" value="DNA-directed RNA polymerase subunit beta"/>
    <property type="match status" value="1"/>
</dbReference>
<dbReference type="Gene3D" id="1.10.132.30">
    <property type="match status" value="1"/>
</dbReference>
<dbReference type="Gene3D" id="1.10.150.390">
    <property type="match status" value="1"/>
</dbReference>
<dbReference type="Gene3D" id="1.10.1790.20">
    <property type="match status" value="1"/>
</dbReference>
<dbReference type="Gene3D" id="1.10.40.90">
    <property type="match status" value="1"/>
</dbReference>
<dbReference type="Gene3D" id="2.40.40.20">
    <property type="match status" value="1"/>
</dbReference>
<dbReference type="Gene3D" id="2.40.50.100">
    <property type="match status" value="1"/>
</dbReference>
<dbReference type="Gene3D" id="4.10.860.120">
    <property type="entry name" value="RNA polymerase II, clamp domain"/>
    <property type="match status" value="1"/>
</dbReference>
<dbReference type="Gene3D" id="1.10.274.100">
    <property type="entry name" value="RNA polymerase Rpb1, domain 3"/>
    <property type="match status" value="2"/>
</dbReference>
<dbReference type="HAMAP" id="MF_01322">
    <property type="entry name" value="RNApol_bact_RpoC"/>
    <property type="match status" value="1"/>
</dbReference>
<dbReference type="InterPro" id="IPR045867">
    <property type="entry name" value="DNA-dir_RpoC_beta_prime"/>
</dbReference>
<dbReference type="InterPro" id="IPR012754">
    <property type="entry name" value="DNA-dir_RpoC_beta_prime_bact"/>
</dbReference>
<dbReference type="InterPro" id="IPR000722">
    <property type="entry name" value="RNA_pol_asu"/>
</dbReference>
<dbReference type="InterPro" id="IPR006592">
    <property type="entry name" value="RNA_pol_N"/>
</dbReference>
<dbReference type="InterPro" id="IPR007080">
    <property type="entry name" value="RNA_pol_Rpb1_1"/>
</dbReference>
<dbReference type="InterPro" id="IPR007066">
    <property type="entry name" value="RNA_pol_Rpb1_3"/>
</dbReference>
<dbReference type="InterPro" id="IPR042102">
    <property type="entry name" value="RNA_pol_Rpb1_3_sf"/>
</dbReference>
<dbReference type="InterPro" id="IPR007083">
    <property type="entry name" value="RNA_pol_Rpb1_4"/>
</dbReference>
<dbReference type="InterPro" id="IPR007081">
    <property type="entry name" value="RNA_pol_Rpb1_5"/>
</dbReference>
<dbReference type="InterPro" id="IPR044893">
    <property type="entry name" value="RNA_pol_Rpb1_clamp_domain"/>
</dbReference>
<dbReference type="InterPro" id="IPR038120">
    <property type="entry name" value="Rpb1_funnel_sf"/>
</dbReference>
<dbReference type="NCBIfam" id="NF011498">
    <property type="entry name" value="PRK14906.1"/>
    <property type="match status" value="1"/>
</dbReference>
<dbReference type="NCBIfam" id="TIGR02386">
    <property type="entry name" value="rpoC_TIGR"/>
    <property type="match status" value="1"/>
</dbReference>
<dbReference type="PANTHER" id="PTHR19376">
    <property type="entry name" value="DNA-DIRECTED RNA POLYMERASE"/>
    <property type="match status" value="1"/>
</dbReference>
<dbReference type="PANTHER" id="PTHR19376:SF54">
    <property type="entry name" value="DNA-DIRECTED RNA POLYMERASE SUBUNIT BETA"/>
    <property type="match status" value="1"/>
</dbReference>
<dbReference type="Pfam" id="PF04997">
    <property type="entry name" value="RNA_pol_Rpb1_1"/>
    <property type="match status" value="1"/>
</dbReference>
<dbReference type="Pfam" id="PF00623">
    <property type="entry name" value="RNA_pol_Rpb1_2"/>
    <property type="match status" value="2"/>
</dbReference>
<dbReference type="Pfam" id="PF04983">
    <property type="entry name" value="RNA_pol_Rpb1_3"/>
    <property type="match status" value="1"/>
</dbReference>
<dbReference type="Pfam" id="PF05000">
    <property type="entry name" value="RNA_pol_Rpb1_4"/>
    <property type="match status" value="1"/>
</dbReference>
<dbReference type="Pfam" id="PF04998">
    <property type="entry name" value="RNA_pol_Rpb1_5"/>
    <property type="match status" value="1"/>
</dbReference>
<dbReference type="SMART" id="SM00663">
    <property type="entry name" value="RPOLA_N"/>
    <property type="match status" value="1"/>
</dbReference>
<dbReference type="SUPFAM" id="SSF64484">
    <property type="entry name" value="beta and beta-prime subunits of DNA dependent RNA-polymerase"/>
    <property type="match status" value="1"/>
</dbReference>
<protein>
    <recommendedName>
        <fullName evidence="1">DNA-directed RNA polymerase subunit beta'</fullName>
        <shortName evidence="1">RNAP subunit beta'</shortName>
        <ecNumber evidence="1">2.7.7.6</ecNumber>
    </recommendedName>
    <alternativeName>
        <fullName evidence="1">RNA polymerase subunit beta'</fullName>
    </alternativeName>
    <alternativeName>
        <fullName evidence="1">Transcriptase subunit beta'</fullName>
    </alternativeName>
</protein>
<sequence length="1178" mass="131579">MFELNNFDALQIGLASPEKIREWSRGEVKKPETINYRTLKPERDGLFCERIFGPMKDWECHCGKYKRIRYKGIVCDRCGVEVTKAKVRRERMGHIELAAPVSHIWYFKGIPSRMGLILDMSPRALEKVLYFASYVVLDPKETPLLKKQLLNEKEYRESIDKYGDDSFVAAMGAEAVKTLLDEIDLEQSSIELKEELKTSTGQKKIRIIRRLEVVESFRKSGNRPDWMVIDVIPVIPPDLRPMVQLDGGRFATSDLNDLYRRVINRNNRLKKLLDLGAPDIIVRNEKRMLQEAVDALIDNGRRGRPVTGPGNRPLKSLSDMLKGKQGRFRQNLLGKRVDYSGRSVIVVGPELKMYQCGLPKEMALELFKPFVMKKLVQNGLAHNIKSAKRMVERVQPQVWDVLEEVISDHPVLLNRAPTLHRLGIQAFQPVLVEGRAIKLHPLVCTAYNADFDGDQMAVHVPLSVEAQAEARFLMLAAHNILKPSDGKPVSVPTQDMVLGSYYLTMDKDGVKGEGKVFSCPEEVLMAYQCKAVDIHAKIKVRLKRVVDGETIEGIIETTPGKIIFNESIPQDLGYIDRTIPENKLKLEVDFLVSKKTLGGIITRCYMKHGATKTSIMLDKIKAKGYHYSTIGAITISTSDMVVPEAKRELLENTEKQVEKIQKMYRRGFISEEERYEKVIDLWTKTTEDVANALMGSLDSFNPIYMMADSGARGSKSQIKQLAGMRGLMANPSGKIIELPIKASFREGLDVLEYFISTHGARKGNADTALKTADSGYLTRRLVDVSQDVIVRQEDCGTEEGYEVSEIKEGNEVIEPLVERLSGRYPSEDIIHPTTGEVIVKRNTYMNEDIAKKVSDAGIKKVKIRSVFTCKSKHGVCARCYGMNMATSQKIHIGEAVGIVAAQSIGEPGTQLTMRTFHTGGVAGADITQGLPRVEELFEARKPKGLAIVSEVSGTVKMEETKKKRTIIVVTDDGEEVSYDIPFGSRIKVKNGDIIAAGDEITEGSINPHDILRIKGVDGVKNYLLSEVQKVYRLQGVDINDKHLEVVIRQMTRKIKIEDSGDTELLPGTMIDVFDFEEANKEILEKGGEPAVGRIALLGITKAALATDSFLSAASFQETTRVLTDAAIKGKIDPLLGLKENVIIGKLIPAGTGMTRYRSIQINTDDENIEEDSIDSIEV</sequence>
<proteinExistence type="inferred from homology"/>
<comment type="function">
    <text evidence="1">DNA-dependent RNA polymerase catalyzes the transcription of DNA into RNA using the four ribonucleoside triphosphates as substrates.</text>
</comment>
<comment type="catalytic activity">
    <reaction evidence="1">
        <text>RNA(n) + a ribonucleoside 5'-triphosphate = RNA(n+1) + diphosphate</text>
        <dbReference type="Rhea" id="RHEA:21248"/>
        <dbReference type="Rhea" id="RHEA-COMP:14527"/>
        <dbReference type="Rhea" id="RHEA-COMP:17342"/>
        <dbReference type="ChEBI" id="CHEBI:33019"/>
        <dbReference type="ChEBI" id="CHEBI:61557"/>
        <dbReference type="ChEBI" id="CHEBI:140395"/>
        <dbReference type="EC" id="2.7.7.6"/>
    </reaction>
</comment>
<comment type="cofactor">
    <cofactor evidence="1">
        <name>Mg(2+)</name>
        <dbReference type="ChEBI" id="CHEBI:18420"/>
    </cofactor>
    <text evidence="1">Binds 1 Mg(2+) ion per subunit.</text>
</comment>
<comment type="cofactor">
    <cofactor evidence="1">
        <name>Zn(2+)</name>
        <dbReference type="ChEBI" id="CHEBI:29105"/>
    </cofactor>
    <text evidence="1">Binds 2 Zn(2+) ions per subunit.</text>
</comment>
<comment type="subunit">
    <text evidence="1">The RNAP catalytic core consists of 2 alpha, 1 beta, 1 beta' and 1 omega subunit. When a sigma factor is associated with the core the holoenzyme is formed, which can initiate transcription.</text>
</comment>
<comment type="similarity">
    <text evidence="1">Belongs to the RNA polymerase beta' chain family.</text>
</comment>
<evidence type="ECO:0000255" key="1">
    <source>
        <dbReference type="HAMAP-Rule" id="MF_01322"/>
    </source>
</evidence>
<keyword id="KW-0240">DNA-directed RNA polymerase</keyword>
<keyword id="KW-0460">Magnesium</keyword>
<keyword id="KW-0479">Metal-binding</keyword>
<keyword id="KW-0548">Nucleotidyltransferase</keyword>
<keyword id="KW-0804">Transcription</keyword>
<keyword id="KW-0808">Transferase</keyword>
<keyword id="KW-0862">Zinc</keyword>
<organism>
    <name type="scientific">Clostridium botulinum (strain Loch Maree / Type A3)</name>
    <dbReference type="NCBI Taxonomy" id="498214"/>
    <lineage>
        <taxon>Bacteria</taxon>
        <taxon>Bacillati</taxon>
        <taxon>Bacillota</taxon>
        <taxon>Clostridia</taxon>
        <taxon>Eubacteriales</taxon>
        <taxon>Clostridiaceae</taxon>
        <taxon>Clostridium</taxon>
    </lineage>
</organism>
<feature type="chain" id="PRO_0000353333" description="DNA-directed RNA polymerase subunit beta'">
    <location>
        <begin position="1"/>
        <end position="1178"/>
    </location>
</feature>
<feature type="binding site" evidence="1">
    <location>
        <position position="60"/>
    </location>
    <ligand>
        <name>Zn(2+)</name>
        <dbReference type="ChEBI" id="CHEBI:29105"/>
        <label>1</label>
    </ligand>
</feature>
<feature type="binding site" evidence="1">
    <location>
        <position position="62"/>
    </location>
    <ligand>
        <name>Zn(2+)</name>
        <dbReference type="ChEBI" id="CHEBI:29105"/>
        <label>1</label>
    </ligand>
</feature>
<feature type="binding site" evidence="1">
    <location>
        <position position="75"/>
    </location>
    <ligand>
        <name>Zn(2+)</name>
        <dbReference type="ChEBI" id="CHEBI:29105"/>
        <label>1</label>
    </ligand>
</feature>
<feature type="binding site" evidence="1">
    <location>
        <position position="78"/>
    </location>
    <ligand>
        <name>Zn(2+)</name>
        <dbReference type="ChEBI" id="CHEBI:29105"/>
        <label>1</label>
    </ligand>
</feature>
<feature type="binding site" evidence="1">
    <location>
        <position position="450"/>
    </location>
    <ligand>
        <name>Mg(2+)</name>
        <dbReference type="ChEBI" id="CHEBI:18420"/>
    </ligand>
</feature>
<feature type="binding site" evidence="1">
    <location>
        <position position="452"/>
    </location>
    <ligand>
        <name>Mg(2+)</name>
        <dbReference type="ChEBI" id="CHEBI:18420"/>
    </ligand>
</feature>
<feature type="binding site" evidence="1">
    <location>
        <position position="454"/>
    </location>
    <ligand>
        <name>Mg(2+)</name>
        <dbReference type="ChEBI" id="CHEBI:18420"/>
    </ligand>
</feature>
<feature type="binding site" evidence="1">
    <location>
        <position position="795"/>
    </location>
    <ligand>
        <name>Zn(2+)</name>
        <dbReference type="ChEBI" id="CHEBI:29105"/>
        <label>2</label>
    </ligand>
</feature>
<feature type="binding site" evidence="1">
    <location>
        <position position="869"/>
    </location>
    <ligand>
        <name>Zn(2+)</name>
        <dbReference type="ChEBI" id="CHEBI:29105"/>
        <label>2</label>
    </ligand>
</feature>
<feature type="binding site" evidence="1">
    <location>
        <position position="876"/>
    </location>
    <ligand>
        <name>Zn(2+)</name>
        <dbReference type="ChEBI" id="CHEBI:29105"/>
        <label>2</label>
    </ligand>
</feature>
<feature type="binding site" evidence="1">
    <location>
        <position position="879"/>
    </location>
    <ligand>
        <name>Zn(2+)</name>
        <dbReference type="ChEBI" id="CHEBI:29105"/>
        <label>2</label>
    </ligand>
</feature>
<accession>B1KSN2</accession>